<evidence type="ECO:0000255" key="1">
    <source>
        <dbReference type="HAMAP-Rule" id="MF_01849"/>
    </source>
</evidence>
<evidence type="ECO:0000255" key="2">
    <source>
        <dbReference type="PROSITE-ProRule" id="PRU01266"/>
    </source>
</evidence>
<accession>B0UWR0</accession>
<comment type="function">
    <text evidence="1">Specifically methylates position 2 of adenine 2503 in 23S rRNA and position 2 of adenine 37 in tRNAs. m2A2503 modification seems to play a crucial role in the proofreading step occurring at the peptidyl transferase center and thus would serve to optimize ribosomal fidelity.</text>
</comment>
<comment type="catalytic activity">
    <reaction evidence="1">
        <text>adenosine(2503) in 23S rRNA + 2 reduced [2Fe-2S]-[ferredoxin] + 2 S-adenosyl-L-methionine = 2-methyladenosine(2503) in 23S rRNA + 5'-deoxyadenosine + L-methionine + 2 oxidized [2Fe-2S]-[ferredoxin] + S-adenosyl-L-homocysteine</text>
        <dbReference type="Rhea" id="RHEA:42916"/>
        <dbReference type="Rhea" id="RHEA-COMP:10000"/>
        <dbReference type="Rhea" id="RHEA-COMP:10001"/>
        <dbReference type="Rhea" id="RHEA-COMP:10152"/>
        <dbReference type="Rhea" id="RHEA-COMP:10282"/>
        <dbReference type="ChEBI" id="CHEBI:17319"/>
        <dbReference type="ChEBI" id="CHEBI:33737"/>
        <dbReference type="ChEBI" id="CHEBI:33738"/>
        <dbReference type="ChEBI" id="CHEBI:57844"/>
        <dbReference type="ChEBI" id="CHEBI:57856"/>
        <dbReference type="ChEBI" id="CHEBI:59789"/>
        <dbReference type="ChEBI" id="CHEBI:74411"/>
        <dbReference type="ChEBI" id="CHEBI:74497"/>
        <dbReference type="EC" id="2.1.1.192"/>
    </reaction>
</comment>
<comment type="catalytic activity">
    <reaction evidence="1">
        <text>adenosine(37) in tRNA + 2 reduced [2Fe-2S]-[ferredoxin] + 2 S-adenosyl-L-methionine = 2-methyladenosine(37) in tRNA + 5'-deoxyadenosine + L-methionine + 2 oxidized [2Fe-2S]-[ferredoxin] + S-adenosyl-L-homocysteine</text>
        <dbReference type="Rhea" id="RHEA:43332"/>
        <dbReference type="Rhea" id="RHEA-COMP:10000"/>
        <dbReference type="Rhea" id="RHEA-COMP:10001"/>
        <dbReference type="Rhea" id="RHEA-COMP:10162"/>
        <dbReference type="Rhea" id="RHEA-COMP:10485"/>
        <dbReference type="ChEBI" id="CHEBI:17319"/>
        <dbReference type="ChEBI" id="CHEBI:33737"/>
        <dbReference type="ChEBI" id="CHEBI:33738"/>
        <dbReference type="ChEBI" id="CHEBI:57844"/>
        <dbReference type="ChEBI" id="CHEBI:57856"/>
        <dbReference type="ChEBI" id="CHEBI:59789"/>
        <dbReference type="ChEBI" id="CHEBI:74411"/>
        <dbReference type="ChEBI" id="CHEBI:74497"/>
        <dbReference type="EC" id="2.1.1.192"/>
    </reaction>
</comment>
<comment type="cofactor">
    <cofactor evidence="1">
        <name>[4Fe-4S] cluster</name>
        <dbReference type="ChEBI" id="CHEBI:49883"/>
    </cofactor>
    <text evidence="1">Binds 1 [4Fe-4S] cluster. The cluster is coordinated with 3 cysteines and an exchangeable S-adenosyl-L-methionine.</text>
</comment>
<comment type="subcellular location">
    <subcellularLocation>
        <location evidence="1">Cytoplasm</location>
    </subcellularLocation>
</comment>
<comment type="miscellaneous">
    <text evidence="1">Reaction proceeds by a ping-pong mechanism involving intermediate methylation of a conserved cysteine residue.</text>
</comment>
<comment type="similarity">
    <text evidence="1">Belongs to the radical SAM superfamily. RlmN family.</text>
</comment>
<organism>
    <name type="scientific">Histophilus somni (strain 2336)</name>
    <name type="common">Haemophilus somnus</name>
    <dbReference type="NCBI Taxonomy" id="228400"/>
    <lineage>
        <taxon>Bacteria</taxon>
        <taxon>Pseudomonadati</taxon>
        <taxon>Pseudomonadota</taxon>
        <taxon>Gammaproteobacteria</taxon>
        <taxon>Pasteurellales</taxon>
        <taxon>Pasteurellaceae</taxon>
        <taxon>Histophilus</taxon>
    </lineage>
</organism>
<gene>
    <name evidence="1" type="primary">rlmN</name>
    <name type="ordered locus">HSM_0364</name>
</gene>
<protein>
    <recommendedName>
        <fullName evidence="1">Dual-specificity RNA methyltransferase RlmN</fullName>
        <ecNumber evidence="1">2.1.1.192</ecNumber>
    </recommendedName>
    <alternativeName>
        <fullName evidence="1">23S rRNA (adenine(2503)-C(2))-methyltransferase</fullName>
    </alternativeName>
    <alternativeName>
        <fullName evidence="1">23S rRNA m2A2503 methyltransferase</fullName>
    </alternativeName>
    <alternativeName>
        <fullName evidence="1">Ribosomal RNA large subunit methyltransferase N</fullName>
    </alternativeName>
    <alternativeName>
        <fullName evidence="1">tRNA (adenine(37)-C(2))-methyltransferase</fullName>
    </alternativeName>
    <alternativeName>
        <fullName evidence="1">tRNA m2A37 methyltransferase</fullName>
    </alternativeName>
</protein>
<sequence length="372" mass="41838">MSDKINLMNLTRQQMRAFFQELGEKPFRADQLVKWIYHFGEDNFDHMTNINKKLREKLKTVAEIKAPEIAVEQRSADGTIKWAMQVGDQQVETVYIPETDRATLCVSSQVGCALACTFCSTAQQGFNRNLTVSEIIGQVWRASKIIGNFGVTGVRPITNVVMMGMGEPLLNVANVVPAMEIMLDDFAYGLSKRRVTLSTSGVVPALDKLSEMIDVALAISLHAPNDELRNEIVPINKKYNIKMLMESVNRYLNVSNANHGKVTIEYVMLDHINDGTEHAHQLAEVLKNTPCKINLIPWNPFPDAPYAKSSNTRIDRFQKTLMEYGFTVILRKTRGDDIDAACGQLAGDVIDRTKRTAQKKRFGKEIGTHQIY</sequence>
<proteinExistence type="inferred from homology"/>
<keyword id="KW-0004">4Fe-4S</keyword>
<keyword id="KW-0963">Cytoplasm</keyword>
<keyword id="KW-1015">Disulfide bond</keyword>
<keyword id="KW-0408">Iron</keyword>
<keyword id="KW-0411">Iron-sulfur</keyword>
<keyword id="KW-0479">Metal-binding</keyword>
<keyword id="KW-0489">Methyltransferase</keyword>
<keyword id="KW-0698">rRNA processing</keyword>
<keyword id="KW-0949">S-adenosyl-L-methionine</keyword>
<keyword id="KW-0808">Transferase</keyword>
<keyword id="KW-0819">tRNA processing</keyword>
<dbReference type="EC" id="2.1.1.192" evidence="1"/>
<dbReference type="EMBL" id="CP000947">
    <property type="protein sequence ID" value="ACA32001.1"/>
    <property type="molecule type" value="Genomic_DNA"/>
</dbReference>
<dbReference type="RefSeq" id="WP_012341220.1">
    <property type="nucleotide sequence ID" value="NC_010519.1"/>
</dbReference>
<dbReference type="SMR" id="B0UWR0"/>
<dbReference type="STRING" id="228400.HSM_0364"/>
<dbReference type="GeneID" id="31486644"/>
<dbReference type="KEGG" id="hsm:HSM_0364"/>
<dbReference type="HOGENOM" id="CLU_029101_0_0_6"/>
<dbReference type="GO" id="GO:0005737">
    <property type="term" value="C:cytoplasm"/>
    <property type="evidence" value="ECO:0007669"/>
    <property type="project" value="UniProtKB-SubCell"/>
</dbReference>
<dbReference type="GO" id="GO:0051539">
    <property type="term" value="F:4 iron, 4 sulfur cluster binding"/>
    <property type="evidence" value="ECO:0007669"/>
    <property type="project" value="UniProtKB-UniRule"/>
</dbReference>
<dbReference type="GO" id="GO:0046872">
    <property type="term" value="F:metal ion binding"/>
    <property type="evidence" value="ECO:0007669"/>
    <property type="project" value="UniProtKB-KW"/>
</dbReference>
<dbReference type="GO" id="GO:0070040">
    <property type="term" value="F:rRNA (adenine(2503)-C2-)-methyltransferase activity"/>
    <property type="evidence" value="ECO:0007669"/>
    <property type="project" value="UniProtKB-UniRule"/>
</dbReference>
<dbReference type="GO" id="GO:0019843">
    <property type="term" value="F:rRNA binding"/>
    <property type="evidence" value="ECO:0007669"/>
    <property type="project" value="UniProtKB-UniRule"/>
</dbReference>
<dbReference type="GO" id="GO:0002935">
    <property type="term" value="F:tRNA (adenine(37)-C2)-methyltransferase activity"/>
    <property type="evidence" value="ECO:0007669"/>
    <property type="project" value="UniProtKB-UniRule"/>
</dbReference>
<dbReference type="GO" id="GO:0000049">
    <property type="term" value="F:tRNA binding"/>
    <property type="evidence" value="ECO:0007669"/>
    <property type="project" value="UniProtKB-UniRule"/>
</dbReference>
<dbReference type="GO" id="GO:0070475">
    <property type="term" value="P:rRNA base methylation"/>
    <property type="evidence" value="ECO:0007669"/>
    <property type="project" value="UniProtKB-UniRule"/>
</dbReference>
<dbReference type="GO" id="GO:0030488">
    <property type="term" value="P:tRNA methylation"/>
    <property type="evidence" value="ECO:0007669"/>
    <property type="project" value="UniProtKB-UniRule"/>
</dbReference>
<dbReference type="CDD" id="cd01335">
    <property type="entry name" value="Radical_SAM"/>
    <property type="match status" value="1"/>
</dbReference>
<dbReference type="FunFam" id="1.10.150.530:FF:000003">
    <property type="entry name" value="Dual-specificity RNA methyltransferase RlmN"/>
    <property type="match status" value="1"/>
</dbReference>
<dbReference type="FunFam" id="3.20.20.70:FF:000008">
    <property type="entry name" value="Dual-specificity RNA methyltransferase RlmN"/>
    <property type="match status" value="1"/>
</dbReference>
<dbReference type="Gene3D" id="1.10.150.530">
    <property type="match status" value="1"/>
</dbReference>
<dbReference type="Gene3D" id="3.20.20.70">
    <property type="entry name" value="Aldolase class I"/>
    <property type="match status" value="1"/>
</dbReference>
<dbReference type="HAMAP" id="MF_01849">
    <property type="entry name" value="RNA_methyltr_RlmN"/>
    <property type="match status" value="1"/>
</dbReference>
<dbReference type="InterPro" id="IPR013785">
    <property type="entry name" value="Aldolase_TIM"/>
</dbReference>
<dbReference type="InterPro" id="IPR040072">
    <property type="entry name" value="Methyltransferase_A"/>
</dbReference>
<dbReference type="InterPro" id="IPR048641">
    <property type="entry name" value="RlmN_N"/>
</dbReference>
<dbReference type="InterPro" id="IPR027492">
    <property type="entry name" value="RNA_MTrfase_RlmN"/>
</dbReference>
<dbReference type="InterPro" id="IPR004383">
    <property type="entry name" value="rRNA_lsu_MTrfase_RlmN/Cfr"/>
</dbReference>
<dbReference type="InterPro" id="IPR007197">
    <property type="entry name" value="rSAM"/>
</dbReference>
<dbReference type="NCBIfam" id="NF008396">
    <property type="entry name" value="PRK11194.1"/>
    <property type="match status" value="1"/>
</dbReference>
<dbReference type="NCBIfam" id="TIGR00048">
    <property type="entry name" value="rRNA_mod_RlmN"/>
    <property type="match status" value="1"/>
</dbReference>
<dbReference type="PANTHER" id="PTHR30544">
    <property type="entry name" value="23S RRNA METHYLTRANSFERASE"/>
    <property type="match status" value="1"/>
</dbReference>
<dbReference type="PANTHER" id="PTHR30544:SF5">
    <property type="entry name" value="RADICAL SAM CORE DOMAIN-CONTAINING PROTEIN"/>
    <property type="match status" value="1"/>
</dbReference>
<dbReference type="Pfam" id="PF04055">
    <property type="entry name" value="Radical_SAM"/>
    <property type="match status" value="1"/>
</dbReference>
<dbReference type="Pfam" id="PF21016">
    <property type="entry name" value="RlmN_N"/>
    <property type="match status" value="1"/>
</dbReference>
<dbReference type="PIRSF" id="PIRSF006004">
    <property type="entry name" value="CHP00048"/>
    <property type="match status" value="1"/>
</dbReference>
<dbReference type="SFLD" id="SFLDF00275">
    <property type="entry name" value="adenosine_C2_methyltransferase"/>
    <property type="match status" value="1"/>
</dbReference>
<dbReference type="SFLD" id="SFLDS00029">
    <property type="entry name" value="Radical_SAM"/>
    <property type="match status" value="1"/>
</dbReference>
<dbReference type="SUPFAM" id="SSF102114">
    <property type="entry name" value="Radical SAM enzymes"/>
    <property type="match status" value="1"/>
</dbReference>
<dbReference type="PROSITE" id="PS51918">
    <property type="entry name" value="RADICAL_SAM"/>
    <property type="match status" value="1"/>
</dbReference>
<reference key="1">
    <citation type="submission" date="2008-02" db="EMBL/GenBank/DDBJ databases">
        <title>Complete sequence of Haemophilus somnus 2336.</title>
        <authorList>
            <consortium name="US DOE Joint Genome Institute"/>
            <person name="Siddaramappa S."/>
            <person name="Duncan A.J."/>
            <person name="Challacombe J.F."/>
            <person name="Rainey D."/>
            <person name="Gillaspy A.F."/>
            <person name="Carson M."/>
            <person name="Gipson J."/>
            <person name="Gipson M."/>
            <person name="Bruce D."/>
            <person name="Detter J.C."/>
            <person name="Han C.S."/>
            <person name="Land M."/>
            <person name="Tapia R."/>
            <person name="Thompson L.S."/>
            <person name="Orvis J."/>
            <person name="Zaitshik J."/>
            <person name="Barnes G."/>
            <person name="Brettin T.S."/>
            <person name="Dyer D.W."/>
            <person name="Inzana T.J."/>
        </authorList>
    </citation>
    <scope>NUCLEOTIDE SEQUENCE [LARGE SCALE GENOMIC DNA]</scope>
    <source>
        <strain>2336</strain>
    </source>
</reference>
<name>RLMN_HISS2</name>
<feature type="chain" id="PRO_0000350205" description="Dual-specificity RNA methyltransferase RlmN">
    <location>
        <begin position="1"/>
        <end position="372"/>
    </location>
</feature>
<feature type="domain" description="Radical SAM core" evidence="2">
    <location>
        <begin position="98"/>
        <end position="337"/>
    </location>
</feature>
<feature type="active site" description="Proton acceptor" evidence="1">
    <location>
        <position position="92"/>
    </location>
</feature>
<feature type="active site" description="S-methylcysteine intermediate" evidence="1">
    <location>
        <position position="342"/>
    </location>
</feature>
<feature type="binding site" evidence="1">
    <location>
        <position position="112"/>
    </location>
    <ligand>
        <name>[4Fe-4S] cluster</name>
        <dbReference type="ChEBI" id="CHEBI:49883"/>
        <note>4Fe-4S-S-AdoMet</note>
    </ligand>
</feature>
<feature type="binding site" evidence="1">
    <location>
        <position position="116"/>
    </location>
    <ligand>
        <name>[4Fe-4S] cluster</name>
        <dbReference type="ChEBI" id="CHEBI:49883"/>
        <note>4Fe-4S-S-AdoMet</note>
    </ligand>
</feature>
<feature type="binding site" evidence="1">
    <location>
        <position position="119"/>
    </location>
    <ligand>
        <name>[4Fe-4S] cluster</name>
        <dbReference type="ChEBI" id="CHEBI:49883"/>
        <note>4Fe-4S-S-AdoMet</note>
    </ligand>
</feature>
<feature type="binding site" evidence="1">
    <location>
        <begin position="166"/>
        <end position="167"/>
    </location>
    <ligand>
        <name>S-adenosyl-L-methionine</name>
        <dbReference type="ChEBI" id="CHEBI:59789"/>
    </ligand>
</feature>
<feature type="binding site" evidence="1">
    <location>
        <position position="198"/>
    </location>
    <ligand>
        <name>S-adenosyl-L-methionine</name>
        <dbReference type="ChEBI" id="CHEBI:59789"/>
    </ligand>
</feature>
<feature type="binding site" evidence="1">
    <location>
        <begin position="220"/>
        <end position="222"/>
    </location>
    <ligand>
        <name>S-adenosyl-L-methionine</name>
        <dbReference type="ChEBI" id="CHEBI:59789"/>
    </ligand>
</feature>
<feature type="binding site" evidence="1">
    <location>
        <position position="299"/>
    </location>
    <ligand>
        <name>S-adenosyl-L-methionine</name>
        <dbReference type="ChEBI" id="CHEBI:59789"/>
    </ligand>
</feature>
<feature type="disulfide bond" description="(transient)" evidence="1">
    <location>
        <begin position="105"/>
        <end position="342"/>
    </location>
</feature>